<evidence type="ECO:0000255" key="1">
    <source>
        <dbReference type="PROSITE-ProRule" id="PRU00159"/>
    </source>
</evidence>
<evidence type="ECO:0000255" key="2">
    <source>
        <dbReference type="PROSITE-ProRule" id="PRU10027"/>
    </source>
</evidence>
<feature type="chain" id="PRO_0000086352" description="Serine/threonine-protein kinase mos">
    <location>
        <begin position="1" status="less than"/>
        <end position="200" status="greater than"/>
    </location>
</feature>
<feature type="domain" description="Protein kinase" evidence="1">
    <location>
        <begin position="2"/>
        <end position="200" status="greater than"/>
    </location>
</feature>
<feature type="active site" description="Proton acceptor" evidence="1 2">
    <location>
        <position position="143"/>
    </location>
</feature>
<feature type="binding site" evidence="1">
    <location>
        <begin position="8"/>
        <end position="16"/>
    </location>
    <ligand>
        <name>ATP</name>
        <dbReference type="ChEBI" id="CHEBI:30616"/>
    </ligand>
</feature>
<feature type="binding site" evidence="1">
    <location>
        <position position="29"/>
    </location>
    <ligand>
        <name>ATP</name>
        <dbReference type="ChEBI" id="CHEBI:30616"/>
    </ligand>
</feature>
<feature type="non-terminal residue">
    <location>
        <position position="1"/>
    </location>
</feature>
<feature type="non-terminal residue">
    <location>
        <position position="200"/>
    </location>
</feature>
<reference key="1">
    <citation type="journal article" date="2001" name="Proc. R. Soc. B">
        <title>Convergence and divergence in the evolution of aquatic birds.</title>
        <authorList>
            <person name="van Tuinen M."/>
            <person name="Butvill D.B."/>
            <person name="Kirsch J.A."/>
            <person name="Hedges S.B."/>
        </authorList>
    </citation>
    <scope>NUCLEOTIDE SEQUENCE [GENOMIC DNA]</scope>
</reference>
<name>MOS_CICNG</name>
<organism>
    <name type="scientific">Ciconia nigra</name>
    <name type="common">Black stork</name>
    <name type="synonym">Ardea nigra</name>
    <dbReference type="NCBI Taxonomy" id="36241"/>
    <lineage>
        <taxon>Eukaryota</taxon>
        <taxon>Metazoa</taxon>
        <taxon>Chordata</taxon>
        <taxon>Craniata</taxon>
        <taxon>Vertebrata</taxon>
        <taxon>Euteleostomi</taxon>
        <taxon>Archelosauria</taxon>
        <taxon>Archosauria</taxon>
        <taxon>Dinosauria</taxon>
        <taxon>Saurischia</taxon>
        <taxon>Theropoda</taxon>
        <taxon>Coelurosauria</taxon>
        <taxon>Aves</taxon>
        <taxon>Neognathae</taxon>
        <taxon>Neoaves</taxon>
        <taxon>Aequornithes</taxon>
        <taxon>Ciconiiformes</taxon>
        <taxon>Ciconiidae</taxon>
        <taxon>Ciconia</taxon>
    </lineage>
</organism>
<keyword id="KW-0067">ATP-binding</keyword>
<keyword id="KW-0418">Kinase</keyword>
<keyword id="KW-0547">Nucleotide-binding</keyword>
<keyword id="KW-0723">Serine/threonine-protein kinase</keyword>
<keyword id="KW-0808">Transferase</keyword>
<comment type="catalytic activity">
    <reaction>
        <text>L-seryl-[protein] + ATP = O-phospho-L-seryl-[protein] + ADP + H(+)</text>
        <dbReference type="Rhea" id="RHEA:17989"/>
        <dbReference type="Rhea" id="RHEA-COMP:9863"/>
        <dbReference type="Rhea" id="RHEA-COMP:11604"/>
        <dbReference type="ChEBI" id="CHEBI:15378"/>
        <dbReference type="ChEBI" id="CHEBI:29999"/>
        <dbReference type="ChEBI" id="CHEBI:30616"/>
        <dbReference type="ChEBI" id="CHEBI:83421"/>
        <dbReference type="ChEBI" id="CHEBI:456216"/>
        <dbReference type="EC" id="2.7.11.1"/>
    </reaction>
</comment>
<comment type="catalytic activity">
    <reaction>
        <text>L-threonyl-[protein] + ATP = O-phospho-L-threonyl-[protein] + ADP + H(+)</text>
        <dbReference type="Rhea" id="RHEA:46608"/>
        <dbReference type="Rhea" id="RHEA-COMP:11060"/>
        <dbReference type="Rhea" id="RHEA-COMP:11605"/>
        <dbReference type="ChEBI" id="CHEBI:15378"/>
        <dbReference type="ChEBI" id="CHEBI:30013"/>
        <dbReference type="ChEBI" id="CHEBI:30616"/>
        <dbReference type="ChEBI" id="CHEBI:61977"/>
        <dbReference type="ChEBI" id="CHEBI:456216"/>
        <dbReference type="EC" id="2.7.11.1"/>
    </reaction>
</comment>
<comment type="similarity">
    <text evidence="1">Belongs to the protein kinase superfamily. Ser/Thr protein kinase family.</text>
</comment>
<protein>
    <recommendedName>
        <fullName>Serine/threonine-protein kinase mos</fullName>
        <ecNumber>2.7.11.1</ecNumber>
    </recommendedName>
    <alternativeName>
        <fullName>Oocyte maturation factor mos</fullName>
    </alternativeName>
</protein>
<sequence length="200" mass="21596">QLCLLQPLGSGGFGSVYKATYHGATVAVKQVKNSSKNRLASRQSFWAELNVARLQHNNVVRVVAASTCAPASQNSLGTIVMEYVGNITLHHVIYGTGDVWRQSEDDEGGCGRKALSMEETVCYSCDIMTGLAFLHSQGIVHLDLKPANIFITEQGVCKIGDFGCSQKLEEGLSQSPHVCQQGGTYTHRAPELLKGERVTA</sequence>
<accession>Q90XV8</accession>
<proteinExistence type="inferred from homology"/>
<gene>
    <name type="primary">MOS</name>
</gene>
<dbReference type="EC" id="2.7.11.1"/>
<dbReference type="EMBL" id="AF339328">
    <property type="protein sequence ID" value="AAL06304.1"/>
    <property type="molecule type" value="Genomic_DNA"/>
</dbReference>
<dbReference type="SMR" id="Q90XV8"/>
<dbReference type="GO" id="GO:0005524">
    <property type="term" value="F:ATP binding"/>
    <property type="evidence" value="ECO:0007669"/>
    <property type="project" value="UniProtKB-KW"/>
</dbReference>
<dbReference type="GO" id="GO:0106310">
    <property type="term" value="F:protein serine kinase activity"/>
    <property type="evidence" value="ECO:0007669"/>
    <property type="project" value="RHEA"/>
</dbReference>
<dbReference type="GO" id="GO:0004674">
    <property type="term" value="F:protein serine/threonine kinase activity"/>
    <property type="evidence" value="ECO:0007669"/>
    <property type="project" value="UniProtKB-KW"/>
</dbReference>
<dbReference type="FunFam" id="3.30.200.20:FF:000316">
    <property type="entry name" value="Proto-oncogene serine/threonine-protein kinase mos"/>
    <property type="match status" value="1"/>
</dbReference>
<dbReference type="Gene3D" id="3.30.200.20">
    <property type="entry name" value="Phosphorylase Kinase, domain 1"/>
    <property type="match status" value="1"/>
</dbReference>
<dbReference type="Gene3D" id="1.10.510.10">
    <property type="entry name" value="Transferase(Phosphotransferase) domain 1"/>
    <property type="match status" value="1"/>
</dbReference>
<dbReference type="InterPro" id="IPR011009">
    <property type="entry name" value="Kinase-like_dom_sf"/>
</dbReference>
<dbReference type="InterPro" id="IPR000719">
    <property type="entry name" value="Prot_kinase_dom"/>
</dbReference>
<dbReference type="InterPro" id="IPR017441">
    <property type="entry name" value="Protein_kinase_ATP_BS"/>
</dbReference>
<dbReference type="InterPro" id="IPR008271">
    <property type="entry name" value="Ser/Thr_kinase_AS"/>
</dbReference>
<dbReference type="InterPro" id="IPR051681">
    <property type="entry name" value="Ser/Thr_Kinases-Pseudokinases"/>
</dbReference>
<dbReference type="PANTHER" id="PTHR44329">
    <property type="entry name" value="SERINE/THREONINE-PROTEIN KINASE TNNI3K-RELATED"/>
    <property type="match status" value="1"/>
</dbReference>
<dbReference type="PANTHER" id="PTHR44329:SF285">
    <property type="entry name" value="V-MOS MOLONEY MURINE SARCOMA VIRAL ONCO HOMOLOG"/>
    <property type="match status" value="1"/>
</dbReference>
<dbReference type="Pfam" id="PF00069">
    <property type="entry name" value="Pkinase"/>
    <property type="match status" value="1"/>
</dbReference>
<dbReference type="SMART" id="SM00220">
    <property type="entry name" value="S_TKc"/>
    <property type="match status" value="1"/>
</dbReference>
<dbReference type="SUPFAM" id="SSF56112">
    <property type="entry name" value="Protein kinase-like (PK-like)"/>
    <property type="match status" value="1"/>
</dbReference>
<dbReference type="PROSITE" id="PS00107">
    <property type="entry name" value="PROTEIN_KINASE_ATP"/>
    <property type="match status" value="1"/>
</dbReference>
<dbReference type="PROSITE" id="PS50011">
    <property type="entry name" value="PROTEIN_KINASE_DOM"/>
    <property type="match status" value="1"/>
</dbReference>
<dbReference type="PROSITE" id="PS00108">
    <property type="entry name" value="PROTEIN_KINASE_ST"/>
    <property type="match status" value="1"/>
</dbReference>